<accession>A6W6D9</accession>
<proteinExistence type="inferred from homology"/>
<organism>
    <name type="scientific">Kineococcus radiotolerans (strain ATCC BAA-149 / DSM 14245 / SRS30216)</name>
    <dbReference type="NCBI Taxonomy" id="266940"/>
    <lineage>
        <taxon>Bacteria</taxon>
        <taxon>Bacillati</taxon>
        <taxon>Actinomycetota</taxon>
        <taxon>Actinomycetes</taxon>
        <taxon>Kineosporiales</taxon>
        <taxon>Kineosporiaceae</taxon>
        <taxon>Kineococcus</taxon>
    </lineage>
</organism>
<gene>
    <name evidence="1" type="primary">mshA</name>
    <name type="ordered locus">Krad_0890</name>
</gene>
<dbReference type="EC" id="2.4.1.250" evidence="1"/>
<dbReference type="EMBL" id="CP000750">
    <property type="protein sequence ID" value="ABS02378.1"/>
    <property type="molecule type" value="Genomic_DNA"/>
</dbReference>
<dbReference type="RefSeq" id="WP_012084772.1">
    <property type="nucleotide sequence ID" value="NC_009664.2"/>
</dbReference>
<dbReference type="SMR" id="A6W6D9"/>
<dbReference type="STRING" id="266940.Krad_0890"/>
<dbReference type="CAZy" id="GT4">
    <property type="family name" value="Glycosyltransferase Family 4"/>
</dbReference>
<dbReference type="KEGG" id="kra:Krad_0890"/>
<dbReference type="eggNOG" id="COG0297">
    <property type="taxonomic scope" value="Bacteria"/>
</dbReference>
<dbReference type="HOGENOM" id="CLU_009583_2_3_11"/>
<dbReference type="OrthoDB" id="9810929at2"/>
<dbReference type="Proteomes" id="UP000001116">
    <property type="component" value="Chromosome"/>
</dbReference>
<dbReference type="GO" id="GO:0008375">
    <property type="term" value="F:acetylglucosaminyltransferase activity"/>
    <property type="evidence" value="ECO:0007669"/>
    <property type="project" value="UniProtKB-UniRule"/>
</dbReference>
<dbReference type="GO" id="GO:0102710">
    <property type="term" value="F:D-inositol-3-phosphate glycosyltransferase activity"/>
    <property type="evidence" value="ECO:0007669"/>
    <property type="project" value="UniProtKB-EC"/>
</dbReference>
<dbReference type="GO" id="GO:0000287">
    <property type="term" value="F:magnesium ion binding"/>
    <property type="evidence" value="ECO:0007669"/>
    <property type="project" value="UniProtKB-UniRule"/>
</dbReference>
<dbReference type="GO" id="GO:0010125">
    <property type="term" value="P:mycothiol biosynthetic process"/>
    <property type="evidence" value="ECO:0007669"/>
    <property type="project" value="UniProtKB-UniRule"/>
</dbReference>
<dbReference type="Gene3D" id="3.40.50.2000">
    <property type="entry name" value="Glycogen Phosphorylase B"/>
    <property type="match status" value="2"/>
</dbReference>
<dbReference type="HAMAP" id="MF_01695">
    <property type="entry name" value="MshA"/>
    <property type="match status" value="1"/>
</dbReference>
<dbReference type="InterPro" id="IPR001296">
    <property type="entry name" value="Glyco_trans_1"/>
</dbReference>
<dbReference type="InterPro" id="IPR028098">
    <property type="entry name" value="Glyco_trans_4-like_N"/>
</dbReference>
<dbReference type="InterPro" id="IPR017814">
    <property type="entry name" value="Mycothiol_biosynthesis_MshA"/>
</dbReference>
<dbReference type="NCBIfam" id="TIGR03449">
    <property type="entry name" value="mycothiol_MshA"/>
    <property type="match status" value="1"/>
</dbReference>
<dbReference type="PANTHER" id="PTHR12526:SF510">
    <property type="entry name" value="D-INOSITOL 3-PHOSPHATE GLYCOSYLTRANSFERASE"/>
    <property type="match status" value="1"/>
</dbReference>
<dbReference type="PANTHER" id="PTHR12526">
    <property type="entry name" value="GLYCOSYLTRANSFERASE"/>
    <property type="match status" value="1"/>
</dbReference>
<dbReference type="Pfam" id="PF13579">
    <property type="entry name" value="Glyco_trans_4_4"/>
    <property type="match status" value="1"/>
</dbReference>
<dbReference type="Pfam" id="PF00534">
    <property type="entry name" value="Glycos_transf_1"/>
    <property type="match status" value="1"/>
</dbReference>
<dbReference type="SUPFAM" id="SSF53756">
    <property type="entry name" value="UDP-Glycosyltransferase/glycogen phosphorylase"/>
    <property type="match status" value="1"/>
</dbReference>
<comment type="function">
    <text evidence="1">Catalyzes the transfer of a N-acetyl-glucosamine moiety to 1D-myo-inositol 3-phosphate to produce 1D-myo-inositol 2-acetamido-2-deoxy-glucopyranoside 3-phosphate in the mycothiol biosynthesis pathway.</text>
</comment>
<comment type="catalytic activity">
    <reaction evidence="1">
        <text>1D-myo-inositol 3-phosphate + UDP-N-acetyl-alpha-D-glucosamine = 1D-myo-inositol 2-acetamido-2-deoxy-alpha-D-glucopyranoside 3-phosphate + UDP + H(+)</text>
        <dbReference type="Rhea" id="RHEA:26188"/>
        <dbReference type="ChEBI" id="CHEBI:15378"/>
        <dbReference type="ChEBI" id="CHEBI:57705"/>
        <dbReference type="ChEBI" id="CHEBI:58223"/>
        <dbReference type="ChEBI" id="CHEBI:58401"/>
        <dbReference type="ChEBI" id="CHEBI:58892"/>
        <dbReference type="EC" id="2.4.1.250"/>
    </reaction>
</comment>
<comment type="subunit">
    <text evidence="1">Homodimer.</text>
</comment>
<comment type="similarity">
    <text evidence="1">Belongs to the glycosyltransferase group 1 family. MshA subfamily.</text>
</comment>
<sequence>MRRSSSVQRVALLSVHTSPLAQPGTGDAGGMNVYVVELATQLARRGVEVEVFTRRTSSEQPPVVETADGVRVRHVAAGPYEGLAKDDLPGQLCAFTAGMLHAEARHAERHYDLVHSHYWLSGQVGWLTADRWDVPLVHSMHTMAKVKNAALAEGDAPEPAGRVIGEQQVVEAADRLVANTDAERRELIDLYGADPAKVVVVPPGVDLATFAPAPGRAASRARLGVPADAEVLLFVGRIQPLKAPDLLVRATAELLREQPWRRSRLRVVVLGGPSGSGTAHPDSLADLVRSLDLEDVVRMAPPVARAELADHYRAADVVAVPSHNESFGLVALEAQACATPVVAAAVGGLRTAVLDDGAGAGTGEGTGLLVPDHTPRSWAAALRTLLDDPARRTAMGARAARRAQGFGWGATAEATLEVYRRAVQDRAAERGADPR</sequence>
<reference key="1">
    <citation type="journal article" date="2008" name="PLoS ONE">
        <title>Survival in nuclear waste, extreme resistance, and potential applications gleaned from the genome sequence of Kineococcus radiotolerans SRS30216.</title>
        <authorList>
            <person name="Bagwell C.E."/>
            <person name="Bhat S."/>
            <person name="Hawkins G.M."/>
            <person name="Smith B.W."/>
            <person name="Biswas T."/>
            <person name="Hoover T.R."/>
            <person name="Saunders E."/>
            <person name="Han C.S."/>
            <person name="Tsodikov O.V."/>
            <person name="Shimkets L.J."/>
        </authorList>
    </citation>
    <scope>NUCLEOTIDE SEQUENCE [LARGE SCALE GENOMIC DNA]</scope>
    <source>
        <strain>ATCC BAA-149 / DSM 14245 / SRS30216</strain>
    </source>
</reference>
<name>MSHA_KINRD</name>
<evidence type="ECO:0000255" key="1">
    <source>
        <dbReference type="HAMAP-Rule" id="MF_01695"/>
    </source>
</evidence>
<feature type="chain" id="PRO_0000400128" description="D-inositol 3-phosphate glycosyltransferase">
    <location>
        <begin position="1"/>
        <end position="435"/>
    </location>
</feature>
<feature type="binding site" evidence="1">
    <location>
        <position position="16"/>
    </location>
    <ligand>
        <name>1D-myo-inositol 3-phosphate</name>
        <dbReference type="ChEBI" id="CHEBI:58401"/>
    </ligand>
</feature>
<feature type="binding site" evidence="1">
    <location>
        <begin position="22"/>
        <end position="23"/>
    </location>
    <ligand>
        <name>UDP-N-acetyl-alpha-D-glucosamine</name>
        <dbReference type="ChEBI" id="CHEBI:57705"/>
    </ligand>
</feature>
<feature type="binding site" evidence="1">
    <location>
        <begin position="27"/>
        <end position="32"/>
    </location>
    <ligand>
        <name>1D-myo-inositol 3-phosphate</name>
        <dbReference type="ChEBI" id="CHEBI:58401"/>
    </ligand>
</feature>
<feature type="binding site" evidence="1">
    <location>
        <position position="30"/>
    </location>
    <ligand>
        <name>UDP-N-acetyl-alpha-D-glucosamine</name>
        <dbReference type="ChEBI" id="CHEBI:57705"/>
    </ligand>
</feature>
<feature type="binding site" evidence="1">
    <location>
        <position position="85"/>
    </location>
    <ligand>
        <name>1D-myo-inositol 3-phosphate</name>
        <dbReference type="ChEBI" id="CHEBI:58401"/>
    </ligand>
</feature>
<feature type="binding site" evidence="1">
    <location>
        <position position="118"/>
    </location>
    <ligand>
        <name>1D-myo-inositol 3-phosphate</name>
        <dbReference type="ChEBI" id="CHEBI:58401"/>
    </ligand>
</feature>
<feature type="binding site" evidence="1">
    <location>
        <position position="142"/>
    </location>
    <ligand>
        <name>1D-myo-inositol 3-phosphate</name>
        <dbReference type="ChEBI" id="CHEBI:58401"/>
    </ligand>
</feature>
<feature type="binding site" evidence="1">
    <location>
        <position position="162"/>
    </location>
    <ligand>
        <name>1D-myo-inositol 3-phosphate</name>
        <dbReference type="ChEBI" id="CHEBI:58401"/>
    </ligand>
</feature>
<feature type="binding site" evidence="1">
    <location>
        <position position="237"/>
    </location>
    <ligand>
        <name>UDP-N-acetyl-alpha-D-glucosamine</name>
        <dbReference type="ChEBI" id="CHEBI:57705"/>
    </ligand>
</feature>
<feature type="binding site" evidence="1">
    <location>
        <position position="242"/>
    </location>
    <ligand>
        <name>UDP-N-acetyl-alpha-D-glucosamine</name>
        <dbReference type="ChEBI" id="CHEBI:57705"/>
    </ligand>
</feature>
<feature type="binding site" evidence="1">
    <location>
        <position position="303"/>
    </location>
    <ligand>
        <name>UDP-N-acetyl-alpha-D-glucosamine</name>
        <dbReference type="ChEBI" id="CHEBI:57705"/>
    </ligand>
</feature>
<feature type="binding site" evidence="1">
    <location>
        <position position="312"/>
    </location>
    <ligand>
        <name>Mg(2+)</name>
        <dbReference type="ChEBI" id="CHEBI:18420"/>
    </ligand>
</feature>
<feature type="binding site" evidence="1">
    <location>
        <position position="313"/>
    </location>
    <ligand>
        <name>Mg(2+)</name>
        <dbReference type="ChEBI" id="CHEBI:18420"/>
    </ligand>
</feature>
<feature type="binding site" evidence="1">
    <location>
        <position position="315"/>
    </location>
    <ligand>
        <name>Mg(2+)</name>
        <dbReference type="ChEBI" id="CHEBI:18420"/>
    </ligand>
</feature>
<feature type="binding site" evidence="1">
    <location>
        <position position="325"/>
    </location>
    <ligand>
        <name>UDP-N-acetyl-alpha-D-glucosamine</name>
        <dbReference type="ChEBI" id="CHEBI:57705"/>
    </ligand>
</feature>
<feature type="binding site" evidence="1">
    <location>
        <position position="333"/>
    </location>
    <ligand>
        <name>UDP-N-acetyl-alpha-D-glucosamine</name>
        <dbReference type="ChEBI" id="CHEBI:57705"/>
    </ligand>
</feature>
<feature type="binding site" evidence="1">
    <location>
        <position position="339"/>
    </location>
    <ligand>
        <name>Mg(2+)</name>
        <dbReference type="ChEBI" id="CHEBI:18420"/>
    </ligand>
</feature>
<keyword id="KW-0328">Glycosyltransferase</keyword>
<keyword id="KW-0460">Magnesium</keyword>
<keyword id="KW-0479">Metal-binding</keyword>
<keyword id="KW-1185">Reference proteome</keyword>
<keyword id="KW-0808">Transferase</keyword>
<protein>
    <recommendedName>
        <fullName>D-inositol 3-phosphate glycosyltransferase</fullName>
        <ecNumber evidence="1">2.4.1.250</ecNumber>
    </recommendedName>
    <alternativeName>
        <fullName evidence="1">N-acetylglucosamine-inositol-phosphate N-acetylglucosaminyltransferase</fullName>
        <shortName evidence="1">GlcNAc-Ins-P N-acetylglucosaminyltransferase</shortName>
    </alternativeName>
</protein>